<reference key="1">
    <citation type="journal article" date="2009" name="BMC Genomics">
        <title>Pseudogene accumulation in the evolutionary histories of Salmonella enterica serovars Paratyphi A and Typhi.</title>
        <authorList>
            <person name="Holt K.E."/>
            <person name="Thomson N.R."/>
            <person name="Wain J."/>
            <person name="Langridge G.C."/>
            <person name="Hasan R."/>
            <person name="Bhutta Z.A."/>
            <person name="Quail M.A."/>
            <person name="Norbertczak H."/>
            <person name="Walker D."/>
            <person name="Simmonds M."/>
            <person name="White B."/>
            <person name="Bason N."/>
            <person name="Mungall K."/>
            <person name="Dougan G."/>
            <person name="Parkhill J."/>
        </authorList>
    </citation>
    <scope>NUCLEOTIDE SEQUENCE [LARGE SCALE GENOMIC DNA]</scope>
    <source>
        <strain>AKU_12601</strain>
    </source>
</reference>
<feature type="chain" id="PRO_1000133916" description="Bifunctional glutamine synthetase adenylyltransferase/adenylyl-removing enzyme">
    <location>
        <begin position="1"/>
        <end position="947"/>
    </location>
</feature>
<feature type="region of interest" description="Adenylyl removase" evidence="1">
    <location>
        <begin position="1"/>
        <end position="440"/>
    </location>
</feature>
<feature type="region of interest" description="Adenylyl transferase" evidence="1">
    <location>
        <begin position="450"/>
        <end position="947"/>
    </location>
</feature>
<name>GLNE_SALPK</name>
<dbReference type="EC" id="2.7.7.89" evidence="1"/>
<dbReference type="EC" id="2.7.7.42" evidence="1"/>
<dbReference type="EMBL" id="FM200053">
    <property type="protein sequence ID" value="CAR61112.1"/>
    <property type="molecule type" value="Genomic_DNA"/>
</dbReference>
<dbReference type="RefSeq" id="WP_000188290.1">
    <property type="nucleotide sequence ID" value="NC_011147.1"/>
</dbReference>
<dbReference type="SMR" id="B5BG12"/>
<dbReference type="KEGG" id="sek:SSPA2865"/>
<dbReference type="HOGENOM" id="CLU_006233_0_1_6"/>
<dbReference type="Proteomes" id="UP000001869">
    <property type="component" value="Chromosome"/>
</dbReference>
<dbReference type="GO" id="GO:0005829">
    <property type="term" value="C:cytosol"/>
    <property type="evidence" value="ECO:0007669"/>
    <property type="project" value="TreeGrafter"/>
</dbReference>
<dbReference type="GO" id="GO:0008882">
    <property type="term" value="F:[glutamate-ammonia-ligase] adenylyltransferase activity"/>
    <property type="evidence" value="ECO:0007669"/>
    <property type="project" value="UniProtKB-UniRule"/>
</dbReference>
<dbReference type="GO" id="GO:0047388">
    <property type="term" value="F:[glutamine synthetase]-adenylyl-L-tyrosine phosphorylase activity"/>
    <property type="evidence" value="ECO:0007669"/>
    <property type="project" value="UniProtKB-EC"/>
</dbReference>
<dbReference type="GO" id="GO:0005524">
    <property type="term" value="F:ATP binding"/>
    <property type="evidence" value="ECO:0007669"/>
    <property type="project" value="UniProtKB-UniRule"/>
</dbReference>
<dbReference type="GO" id="GO:0000287">
    <property type="term" value="F:magnesium ion binding"/>
    <property type="evidence" value="ECO:0007669"/>
    <property type="project" value="UniProtKB-UniRule"/>
</dbReference>
<dbReference type="GO" id="GO:0000820">
    <property type="term" value="P:regulation of glutamine family amino acid metabolic process"/>
    <property type="evidence" value="ECO:0007669"/>
    <property type="project" value="UniProtKB-UniRule"/>
</dbReference>
<dbReference type="CDD" id="cd05401">
    <property type="entry name" value="NT_GlnE_GlnD_like"/>
    <property type="match status" value="2"/>
</dbReference>
<dbReference type="FunFam" id="1.10.4050.10:FF:000001">
    <property type="entry name" value="Bifunctional glutamine synthetase adenylyltransferase/adenylyl-removing enzyme"/>
    <property type="match status" value="1"/>
</dbReference>
<dbReference type="FunFam" id="1.20.120.1510:FF:000001">
    <property type="entry name" value="Bifunctional glutamine synthetase adenylyltransferase/adenylyl-removing enzyme"/>
    <property type="match status" value="1"/>
</dbReference>
<dbReference type="FunFam" id="1.20.120.330:FF:000005">
    <property type="entry name" value="Bifunctional glutamine synthetase adenylyltransferase/adenylyl-removing enzyme"/>
    <property type="match status" value="1"/>
</dbReference>
<dbReference type="FunFam" id="1.20.120.330:FF:000008">
    <property type="entry name" value="Bifunctional glutamine synthetase adenylyltransferase/adenylyl-removing enzyme"/>
    <property type="match status" value="1"/>
</dbReference>
<dbReference type="FunFam" id="3.30.460.10:FF:000009">
    <property type="entry name" value="Bifunctional glutamine synthetase adenylyltransferase/adenylyl-removing enzyme"/>
    <property type="match status" value="1"/>
</dbReference>
<dbReference type="FunFam" id="3.30.460.10:FF:000014">
    <property type="entry name" value="Bifunctional glutamine synthetase adenylyltransferase/adenylyl-removing enzyme"/>
    <property type="match status" value="1"/>
</dbReference>
<dbReference type="Gene3D" id="1.20.120.1510">
    <property type="match status" value="1"/>
</dbReference>
<dbReference type="Gene3D" id="3.30.460.10">
    <property type="entry name" value="Beta Polymerase, domain 2"/>
    <property type="match status" value="2"/>
</dbReference>
<dbReference type="Gene3D" id="1.10.4050.10">
    <property type="entry name" value="Glutamine synthase adenylyltransferase GlnE"/>
    <property type="match status" value="1"/>
</dbReference>
<dbReference type="Gene3D" id="1.20.120.330">
    <property type="entry name" value="Nucleotidyltransferases domain 2"/>
    <property type="match status" value="2"/>
</dbReference>
<dbReference type="HAMAP" id="MF_00802">
    <property type="entry name" value="GlnE"/>
    <property type="match status" value="1"/>
</dbReference>
<dbReference type="InterPro" id="IPR023057">
    <property type="entry name" value="GlnE"/>
</dbReference>
<dbReference type="InterPro" id="IPR005190">
    <property type="entry name" value="GlnE_rpt_dom"/>
</dbReference>
<dbReference type="InterPro" id="IPR043519">
    <property type="entry name" value="NT_sf"/>
</dbReference>
<dbReference type="InterPro" id="IPR013546">
    <property type="entry name" value="PII_UdlTrfase/GS_AdlTrfase"/>
</dbReference>
<dbReference type="NCBIfam" id="NF008292">
    <property type="entry name" value="PRK11072.1"/>
    <property type="match status" value="1"/>
</dbReference>
<dbReference type="PANTHER" id="PTHR30621:SF0">
    <property type="entry name" value="BIFUNCTIONAL GLUTAMINE SYNTHETASE ADENYLYLTRANSFERASE_ADENYLYL-REMOVING ENZYME"/>
    <property type="match status" value="1"/>
</dbReference>
<dbReference type="PANTHER" id="PTHR30621">
    <property type="entry name" value="GLUTAMINE SYNTHETASE ADENYLYLTRANSFERASE"/>
    <property type="match status" value="1"/>
</dbReference>
<dbReference type="Pfam" id="PF08335">
    <property type="entry name" value="GlnD_UR_UTase"/>
    <property type="match status" value="2"/>
</dbReference>
<dbReference type="Pfam" id="PF03710">
    <property type="entry name" value="GlnE"/>
    <property type="match status" value="2"/>
</dbReference>
<dbReference type="SUPFAM" id="SSF81301">
    <property type="entry name" value="Nucleotidyltransferase"/>
    <property type="match status" value="2"/>
</dbReference>
<dbReference type="SUPFAM" id="SSF81593">
    <property type="entry name" value="Nucleotidyltransferase substrate binding subunit/domain"/>
    <property type="match status" value="2"/>
</dbReference>
<protein>
    <recommendedName>
        <fullName evidence="1">Bifunctional glutamine synthetase adenylyltransferase/adenylyl-removing enzyme</fullName>
    </recommendedName>
    <alternativeName>
        <fullName evidence="1">ATP:glutamine synthetase adenylyltransferase</fullName>
    </alternativeName>
    <alternativeName>
        <fullName evidence="1">ATase</fullName>
    </alternativeName>
    <domain>
        <recommendedName>
            <fullName evidence="1">Glutamine synthetase adenylyl-L-tyrosine phosphorylase</fullName>
            <ecNumber evidence="1">2.7.7.89</ecNumber>
        </recommendedName>
        <alternativeName>
            <fullName evidence="1">Adenylyl removase</fullName>
            <shortName evidence="1">AR</shortName>
            <shortName evidence="1">AT-N</shortName>
        </alternativeName>
    </domain>
    <domain>
        <recommendedName>
            <fullName evidence="1">Glutamine synthetase adenylyl transferase</fullName>
            <ecNumber evidence="1">2.7.7.42</ecNumber>
        </recommendedName>
        <alternativeName>
            <fullName evidence="1">Adenylyl transferase</fullName>
            <shortName evidence="1">AT</shortName>
            <shortName evidence="1">AT-C</shortName>
        </alternativeName>
    </domain>
</protein>
<keyword id="KW-0067">ATP-binding</keyword>
<keyword id="KW-0460">Magnesium</keyword>
<keyword id="KW-0511">Multifunctional enzyme</keyword>
<keyword id="KW-0547">Nucleotide-binding</keyword>
<keyword id="KW-0548">Nucleotidyltransferase</keyword>
<keyword id="KW-0808">Transferase</keyword>
<evidence type="ECO:0000255" key="1">
    <source>
        <dbReference type="HAMAP-Rule" id="MF_00802"/>
    </source>
</evidence>
<comment type="function">
    <text evidence="1">Involved in the regulation of glutamine synthetase GlnA, a key enzyme in the process to assimilate ammonia. When cellular nitrogen levels are high, the C-terminal adenylyl transferase (AT) inactivates GlnA by covalent transfer of an adenylyl group from ATP to specific tyrosine residue of GlnA, thus reducing its activity. Conversely, when nitrogen levels are low, the N-terminal adenylyl removase (AR) activates GlnA by removing the adenylyl group by phosphorolysis, increasing its activity. The regulatory region of GlnE binds the signal transduction protein PII (GlnB) which indicates the nitrogen status of the cell.</text>
</comment>
<comment type="catalytic activity">
    <reaction evidence="1">
        <text>[glutamine synthetase]-O(4)-(5'-adenylyl)-L-tyrosine + phosphate = [glutamine synthetase]-L-tyrosine + ADP</text>
        <dbReference type="Rhea" id="RHEA:43716"/>
        <dbReference type="Rhea" id="RHEA-COMP:10660"/>
        <dbReference type="Rhea" id="RHEA-COMP:10661"/>
        <dbReference type="ChEBI" id="CHEBI:43474"/>
        <dbReference type="ChEBI" id="CHEBI:46858"/>
        <dbReference type="ChEBI" id="CHEBI:83624"/>
        <dbReference type="ChEBI" id="CHEBI:456216"/>
        <dbReference type="EC" id="2.7.7.89"/>
    </reaction>
</comment>
<comment type="catalytic activity">
    <reaction evidence="1">
        <text>[glutamine synthetase]-L-tyrosine + ATP = [glutamine synthetase]-O(4)-(5'-adenylyl)-L-tyrosine + diphosphate</text>
        <dbReference type="Rhea" id="RHEA:18589"/>
        <dbReference type="Rhea" id="RHEA-COMP:10660"/>
        <dbReference type="Rhea" id="RHEA-COMP:10661"/>
        <dbReference type="ChEBI" id="CHEBI:30616"/>
        <dbReference type="ChEBI" id="CHEBI:33019"/>
        <dbReference type="ChEBI" id="CHEBI:46858"/>
        <dbReference type="ChEBI" id="CHEBI:83624"/>
        <dbReference type="EC" id="2.7.7.42"/>
    </reaction>
</comment>
<comment type="cofactor">
    <cofactor evidence="1">
        <name>Mg(2+)</name>
        <dbReference type="ChEBI" id="CHEBI:18420"/>
    </cofactor>
</comment>
<comment type="similarity">
    <text evidence="1">Belongs to the GlnE family.</text>
</comment>
<gene>
    <name evidence="1" type="primary">glnE</name>
    <name type="ordered locus">SSPA2865</name>
</gene>
<proteinExistence type="inferred from homology"/>
<organism>
    <name type="scientific">Salmonella paratyphi A (strain AKU_12601)</name>
    <dbReference type="NCBI Taxonomy" id="554290"/>
    <lineage>
        <taxon>Bacteria</taxon>
        <taxon>Pseudomonadati</taxon>
        <taxon>Pseudomonadota</taxon>
        <taxon>Gammaproteobacteria</taxon>
        <taxon>Enterobacterales</taxon>
        <taxon>Enterobacteriaceae</taxon>
        <taxon>Salmonella</taxon>
    </lineage>
</organism>
<sequence>MTPLSSPLSQYCQTVVERLPEGFTETSLSAQAKSVLTFSDFALDSVIAHPEWLAELESASPQADEWRHYAGWLQEALAGVCDDASLMRELRLFRRRIMVRIAWAQTLSLVDDETILQQLSHLAETLIVGARDWLYAACCREWGTPCNPQGVPQPLLILGMGKLGGGELNFSSDIDLIFAWPEHGETRGGRRELDNAQFFTRLGQRLIKALDQPTMDGFVYRVDMRLRPFGDSGPLVLSFAALEDYYQEQGRDWERYAMVKARLMGDNDDAWSRELRAMLRPFVFRRYIDFSVIQSLRNMKGMIAREVRRRGLKDNIKLGAGGIREIEFIVQVFQLIRGGREPSLQSRSLLPTLDAIAALHLLPENDVAQLRMAYLFLRRLENLLQSINDEQTQTLPADDLNRARLAWGMKAENWPQLVGELTDHMANVRRVFNELIGDDEADTPQEEERSEPWREVWQDALQEDDSTPVLAHLADEDRRQVLTLIADFRKELDKRPIGPRGRQVLDQLMPHLLANVCSREDAAVTLSRITPLLAGIVTRTTYLELLSEFPGALKHLIMLCAASPMIASQLARYPLLLDELLDPGTLYQPTATDAYRDELRQYLLRVPEEDEEQQLEALRQFKQAQLLRIAAADIAGTLPVMKVSDHLTWLAEAMIDAVVQQAWTQMVARYGQPAHLDERQGRGFAVVGYGKLGGWELGYSSDLDLIFLHDCPMDVMTNGEREIDGRQFYLRLAQRIMHLFSTRTSSGILYEVDARLRPSGAAGMLVTSADAFADYQQHEAWTWEHQALVRARVVYGDPQLTSQFDAVRRTIMTTARDGKTLQTEVREMREKMRAHLGNKHRDRFDIKADEGGITDIEFIAQYLVLRYAHEKPKLTRWSDNVRILELLAQNGIMDEHEAQALTVAYTTLRDELHHLALQELPGHVAQTCFSKERALVQASWRKWLVAV</sequence>
<accession>B5BG12</accession>